<keyword id="KW-0963">Cytoplasm</keyword>
<keyword id="KW-0671">Queuosine biosynthesis</keyword>
<keyword id="KW-0949">S-adenosyl-L-methionine</keyword>
<keyword id="KW-0808">Transferase</keyword>
<organism>
    <name type="scientific">Pseudomonas fluorescens (strain ATCC BAA-477 / NRRL B-23932 / Pf-5)</name>
    <dbReference type="NCBI Taxonomy" id="220664"/>
    <lineage>
        <taxon>Bacteria</taxon>
        <taxon>Pseudomonadati</taxon>
        <taxon>Pseudomonadota</taxon>
        <taxon>Gammaproteobacteria</taxon>
        <taxon>Pseudomonadales</taxon>
        <taxon>Pseudomonadaceae</taxon>
        <taxon>Pseudomonas</taxon>
    </lineage>
</organism>
<proteinExistence type="inferred from homology"/>
<sequence>MRVADFTFELPDSLIARHPLAERRGSRLLTLDGPTGALAHRQFTDLLEHLRPGDLMVFNNTRVIPARLFGQKASGGKLEILVERVLDSHRVLAHVRSSKSPKPGSKILIDGGGEAEMLARHDTLFELGFAEEVLPLLDRVGHMPLPPYIDRPDEGADRERYQTVYAQRLGAVAAPTAGLHFDQPLLEAIAAKGVETAFVTLHVGAGTFQPVRVERIEDHHMHHEWLEVGQDVVDAVAACRARGGRVVAVGTTSVRSLESAARDGVLKPFSGDTDIFIYPGRPFHVVDALVTNFHLPESTLLMLVSAFAGYPETMAAYRAAVENGYRFFSYGDAMFITRNPAPTAPKDLAPEETV</sequence>
<name>QUEA_PSEF5</name>
<feature type="chain" id="PRO_0000231359" description="S-adenosylmethionine:tRNA ribosyltransferase-isomerase">
    <location>
        <begin position="1"/>
        <end position="354"/>
    </location>
</feature>
<reference key="1">
    <citation type="journal article" date="2005" name="Nat. Biotechnol.">
        <title>Complete genome sequence of the plant commensal Pseudomonas fluorescens Pf-5.</title>
        <authorList>
            <person name="Paulsen I.T."/>
            <person name="Press C.M."/>
            <person name="Ravel J."/>
            <person name="Kobayashi D.Y."/>
            <person name="Myers G.S.A."/>
            <person name="Mavrodi D.V."/>
            <person name="DeBoy R.T."/>
            <person name="Seshadri R."/>
            <person name="Ren Q."/>
            <person name="Madupu R."/>
            <person name="Dodson R.J."/>
            <person name="Durkin A.S."/>
            <person name="Brinkac L.M."/>
            <person name="Daugherty S.C."/>
            <person name="Sullivan S.A."/>
            <person name="Rosovitz M.J."/>
            <person name="Gwinn M.L."/>
            <person name="Zhou L."/>
            <person name="Schneider D.J."/>
            <person name="Cartinhour S.W."/>
            <person name="Nelson W.C."/>
            <person name="Weidman J."/>
            <person name="Watkins K."/>
            <person name="Tran K."/>
            <person name="Khouri H."/>
            <person name="Pierson E.A."/>
            <person name="Pierson L.S. III"/>
            <person name="Thomashow L.S."/>
            <person name="Loper J.E."/>
        </authorList>
    </citation>
    <scope>NUCLEOTIDE SEQUENCE [LARGE SCALE GENOMIC DNA]</scope>
    <source>
        <strain>ATCC BAA-477 / NRRL B-23932 / Pf-5</strain>
    </source>
</reference>
<accession>Q4K6S8</accession>
<dbReference type="EC" id="2.4.99.17" evidence="1"/>
<dbReference type="EMBL" id="CP000076">
    <property type="protein sequence ID" value="AAY94204.1"/>
    <property type="molecule type" value="Genomic_DNA"/>
</dbReference>
<dbReference type="RefSeq" id="WP_011063226.1">
    <property type="nucleotide sequence ID" value="NC_004129.6"/>
</dbReference>
<dbReference type="SMR" id="Q4K6S8"/>
<dbReference type="STRING" id="220664.PFL_4975"/>
<dbReference type="GeneID" id="57477957"/>
<dbReference type="KEGG" id="pfl:PFL_4975"/>
<dbReference type="PATRIC" id="fig|220664.5.peg.5097"/>
<dbReference type="eggNOG" id="COG0809">
    <property type="taxonomic scope" value="Bacteria"/>
</dbReference>
<dbReference type="HOGENOM" id="CLU_039110_1_0_6"/>
<dbReference type="UniPathway" id="UPA00392"/>
<dbReference type="Proteomes" id="UP000008540">
    <property type="component" value="Chromosome"/>
</dbReference>
<dbReference type="GO" id="GO:0005737">
    <property type="term" value="C:cytoplasm"/>
    <property type="evidence" value="ECO:0007669"/>
    <property type="project" value="UniProtKB-SubCell"/>
</dbReference>
<dbReference type="GO" id="GO:0051075">
    <property type="term" value="F:S-adenosylmethionine:tRNA ribosyltransferase-isomerase activity"/>
    <property type="evidence" value="ECO:0007669"/>
    <property type="project" value="UniProtKB-EC"/>
</dbReference>
<dbReference type="GO" id="GO:0008616">
    <property type="term" value="P:queuosine biosynthetic process"/>
    <property type="evidence" value="ECO:0007669"/>
    <property type="project" value="UniProtKB-UniRule"/>
</dbReference>
<dbReference type="GO" id="GO:0002099">
    <property type="term" value="P:tRNA wobble guanine modification"/>
    <property type="evidence" value="ECO:0007669"/>
    <property type="project" value="TreeGrafter"/>
</dbReference>
<dbReference type="FunFam" id="2.40.10.240:FF:000001">
    <property type="entry name" value="S-adenosylmethionine:tRNA ribosyltransferase-isomerase"/>
    <property type="match status" value="1"/>
</dbReference>
<dbReference type="FunFam" id="3.40.1780.10:FF:000001">
    <property type="entry name" value="S-adenosylmethionine:tRNA ribosyltransferase-isomerase"/>
    <property type="match status" value="1"/>
</dbReference>
<dbReference type="Gene3D" id="2.40.10.240">
    <property type="entry name" value="QueA-like"/>
    <property type="match status" value="1"/>
</dbReference>
<dbReference type="Gene3D" id="3.40.1780.10">
    <property type="entry name" value="QueA-like"/>
    <property type="match status" value="1"/>
</dbReference>
<dbReference type="HAMAP" id="MF_00113">
    <property type="entry name" value="QueA"/>
    <property type="match status" value="1"/>
</dbReference>
<dbReference type="InterPro" id="IPR003699">
    <property type="entry name" value="QueA"/>
</dbReference>
<dbReference type="InterPro" id="IPR042118">
    <property type="entry name" value="QueA_dom1"/>
</dbReference>
<dbReference type="InterPro" id="IPR042119">
    <property type="entry name" value="QueA_dom2"/>
</dbReference>
<dbReference type="InterPro" id="IPR036100">
    <property type="entry name" value="QueA_sf"/>
</dbReference>
<dbReference type="NCBIfam" id="NF001140">
    <property type="entry name" value="PRK00147.1"/>
    <property type="match status" value="1"/>
</dbReference>
<dbReference type="NCBIfam" id="TIGR00113">
    <property type="entry name" value="queA"/>
    <property type="match status" value="1"/>
</dbReference>
<dbReference type="PANTHER" id="PTHR30307">
    <property type="entry name" value="S-ADENOSYLMETHIONINE:TRNA RIBOSYLTRANSFERASE-ISOMERASE"/>
    <property type="match status" value="1"/>
</dbReference>
<dbReference type="PANTHER" id="PTHR30307:SF0">
    <property type="entry name" value="S-ADENOSYLMETHIONINE:TRNA RIBOSYLTRANSFERASE-ISOMERASE"/>
    <property type="match status" value="1"/>
</dbReference>
<dbReference type="Pfam" id="PF02547">
    <property type="entry name" value="Queuosine_synth"/>
    <property type="match status" value="1"/>
</dbReference>
<dbReference type="SUPFAM" id="SSF111337">
    <property type="entry name" value="QueA-like"/>
    <property type="match status" value="1"/>
</dbReference>
<evidence type="ECO:0000255" key="1">
    <source>
        <dbReference type="HAMAP-Rule" id="MF_00113"/>
    </source>
</evidence>
<comment type="function">
    <text evidence="1">Transfers and isomerizes the ribose moiety from AdoMet to the 7-aminomethyl group of 7-deazaguanine (preQ1-tRNA) to give epoxyqueuosine (oQ-tRNA).</text>
</comment>
<comment type="catalytic activity">
    <reaction evidence="1">
        <text>7-aminomethyl-7-carbaguanosine(34) in tRNA + S-adenosyl-L-methionine = epoxyqueuosine(34) in tRNA + adenine + L-methionine + 2 H(+)</text>
        <dbReference type="Rhea" id="RHEA:32155"/>
        <dbReference type="Rhea" id="RHEA-COMP:10342"/>
        <dbReference type="Rhea" id="RHEA-COMP:18582"/>
        <dbReference type="ChEBI" id="CHEBI:15378"/>
        <dbReference type="ChEBI" id="CHEBI:16708"/>
        <dbReference type="ChEBI" id="CHEBI:57844"/>
        <dbReference type="ChEBI" id="CHEBI:59789"/>
        <dbReference type="ChEBI" id="CHEBI:82833"/>
        <dbReference type="ChEBI" id="CHEBI:194443"/>
        <dbReference type="EC" id="2.4.99.17"/>
    </reaction>
</comment>
<comment type="pathway">
    <text evidence="1">tRNA modification; tRNA-queuosine biosynthesis.</text>
</comment>
<comment type="subunit">
    <text evidence="1">Monomer.</text>
</comment>
<comment type="subcellular location">
    <subcellularLocation>
        <location evidence="1">Cytoplasm</location>
    </subcellularLocation>
</comment>
<comment type="similarity">
    <text evidence="1">Belongs to the QueA family.</text>
</comment>
<protein>
    <recommendedName>
        <fullName evidence="1">S-adenosylmethionine:tRNA ribosyltransferase-isomerase</fullName>
        <ecNumber evidence="1">2.4.99.17</ecNumber>
    </recommendedName>
    <alternativeName>
        <fullName evidence="1">Queuosine biosynthesis protein QueA</fullName>
    </alternativeName>
</protein>
<gene>
    <name evidence="1" type="primary">queA</name>
    <name type="ordered locus">PFL_4975</name>
</gene>